<feature type="signal peptide" evidence="2">
    <location>
        <begin position="1"/>
        <end position="34"/>
    </location>
</feature>
<feature type="chain" id="PRO_0000239561" description="Envelope glycoprotein">
    <location>
        <begin position="35"/>
        <end position="668"/>
    </location>
</feature>
<feature type="chain" id="PRO_0000040706" description="Surface protein" evidence="1">
    <location>
        <begin position="35"/>
        <end position="465"/>
    </location>
</feature>
<feature type="chain" id="PRO_0000040707" description="Transmembrane protein" evidence="1">
    <location>
        <begin position="466"/>
        <end position="644"/>
    </location>
</feature>
<feature type="peptide" id="PRO_0000239562" description="R-peptide" evidence="1">
    <location>
        <begin position="645"/>
        <end position="668"/>
    </location>
</feature>
<feature type="topological domain" description="Extracellular" evidence="2">
    <location>
        <begin position="35"/>
        <end position="605"/>
    </location>
</feature>
<feature type="transmembrane region" description="Helical" evidence="2">
    <location>
        <begin position="606"/>
        <end position="626"/>
    </location>
</feature>
<feature type="topological domain" description="Cytoplasmic" evidence="2">
    <location>
        <begin position="627"/>
        <end position="668"/>
    </location>
</feature>
<feature type="region of interest" description="Disordered" evidence="3">
    <location>
        <begin position="243"/>
        <end position="264"/>
    </location>
</feature>
<feature type="region of interest" description="Fusion peptide" evidence="2">
    <location>
        <begin position="467"/>
        <end position="487"/>
    </location>
</feature>
<feature type="region of interest" description="Immunosuppression" evidence="1">
    <location>
        <begin position="533"/>
        <end position="549"/>
    </location>
</feature>
<feature type="coiled-coil region" evidence="2">
    <location>
        <begin position="495"/>
        <end position="544"/>
    </location>
</feature>
<feature type="coiled-coil region" evidence="2">
    <location>
        <begin position="554"/>
        <end position="590"/>
    </location>
</feature>
<feature type="short sequence motif" description="CXXC">
    <location>
        <begin position="332"/>
        <end position="335"/>
    </location>
</feature>
<feature type="short sequence motif" description="CX6CC">
    <location>
        <begin position="550"/>
        <end position="558"/>
    </location>
</feature>
<feature type="short sequence motif" description="YXXL motif; contains endocytosis signal" evidence="1">
    <location>
        <begin position="650"/>
        <end position="653"/>
    </location>
</feature>
<feature type="site" description="Cleavage; by host" evidence="1">
    <location>
        <begin position="465"/>
        <end position="466"/>
    </location>
</feature>
<feature type="site" description="Cleavage; by viral protease" evidence="1">
    <location>
        <begin position="644"/>
        <end position="645"/>
    </location>
</feature>
<feature type="lipid moiety-binding region" description="S-palmitoyl cysteine; by host" evidence="1">
    <location>
        <position position="625"/>
    </location>
</feature>
<feature type="glycosylation site" description="N-linked (GlcNAc...) asparagine; by host" evidence="2">
    <location>
        <position position="43"/>
    </location>
</feature>
<feature type="glycosylation site" description="N-linked (GlcNAc...) asparagine; by host" evidence="2">
    <location>
        <position position="58"/>
    </location>
</feature>
<feature type="glycosylation site" description="N-linked (GlcNAc...) asparagine; by host" evidence="2">
    <location>
        <position position="286"/>
    </location>
</feature>
<feature type="glycosylation site" description="N-linked (GlcNAc...) asparagine; by host" evidence="2">
    <location>
        <position position="322"/>
    </location>
</feature>
<feature type="glycosylation site" description="N-linked (GlcNAc...) asparagine; by host" evidence="2">
    <location>
        <position position="327"/>
    </location>
</feature>
<feature type="glycosylation site" description="N-linked (GlcNAc...) asparagine; by host" evidence="2">
    <location>
        <position position="351"/>
    </location>
</feature>
<feature type="glycosylation site" description="N-linked (GlcNAc...) asparagine; by host" evidence="2">
    <location>
        <position position="354"/>
    </location>
</feature>
<feature type="glycosylation site" description="N-linked (GlcNAc...) asparagine; by host" evidence="2">
    <location>
        <position position="394"/>
    </location>
</feature>
<feature type="glycosylation site" description="N-linked (GlcNAc...) asparagine; by host" evidence="2">
    <location>
        <position position="410"/>
    </location>
</feature>
<feature type="glycosylation site" description="N-linked (GlcNAc...) asparagine; by host" evidence="2">
    <location>
        <position position="430"/>
    </location>
</feature>
<feature type="disulfide bond" evidence="1">
    <location>
        <begin position="115"/>
        <end position="132"/>
    </location>
</feature>
<feature type="disulfide bond" evidence="1">
    <location>
        <begin position="124"/>
        <end position="137"/>
    </location>
</feature>
<feature type="disulfide bond" description="Interchain (between SU and TM chains, or C-335 with C-558); in linked form" evidence="1">
    <location>
        <begin position="332"/>
        <end position="558"/>
    </location>
</feature>
<feature type="disulfide bond" evidence="1">
    <location>
        <begin position="332"/>
        <end position="335"/>
    </location>
</feature>
<feature type="disulfide bond" evidence="1">
    <location>
        <begin position="550"/>
        <end position="557"/>
    </location>
</feature>
<accession>P21443</accession>
<dbReference type="EMBL" id="M25425">
    <property type="protein sequence ID" value="AAA30809.1"/>
    <property type="molecule type" value="Genomic_DNA"/>
</dbReference>
<dbReference type="SMR" id="P21443"/>
<dbReference type="GlyCosmos" id="P21443">
    <property type="glycosylation" value="10 sites, No reported glycans"/>
</dbReference>
<dbReference type="GO" id="GO:0020002">
    <property type="term" value="C:host cell plasma membrane"/>
    <property type="evidence" value="ECO:0007669"/>
    <property type="project" value="UniProtKB-SubCell"/>
</dbReference>
<dbReference type="GO" id="GO:0016020">
    <property type="term" value="C:membrane"/>
    <property type="evidence" value="ECO:0007669"/>
    <property type="project" value="UniProtKB-KW"/>
</dbReference>
<dbReference type="GO" id="GO:0019031">
    <property type="term" value="C:viral envelope"/>
    <property type="evidence" value="ECO:0007669"/>
    <property type="project" value="UniProtKB-KW"/>
</dbReference>
<dbReference type="GO" id="GO:0055036">
    <property type="term" value="C:virion membrane"/>
    <property type="evidence" value="ECO:0007669"/>
    <property type="project" value="UniProtKB-SubCell"/>
</dbReference>
<dbReference type="GO" id="GO:0019064">
    <property type="term" value="P:fusion of virus membrane with host plasma membrane"/>
    <property type="evidence" value="ECO:0007669"/>
    <property type="project" value="UniProtKB-KW"/>
</dbReference>
<dbReference type="GO" id="GO:0046718">
    <property type="term" value="P:symbiont entry into host cell"/>
    <property type="evidence" value="ECO:0007669"/>
    <property type="project" value="UniProtKB-KW"/>
</dbReference>
<dbReference type="GO" id="GO:0019062">
    <property type="term" value="P:virion attachment to host cell"/>
    <property type="evidence" value="ECO:0007669"/>
    <property type="project" value="UniProtKB-KW"/>
</dbReference>
<dbReference type="CDD" id="cd09851">
    <property type="entry name" value="HTLV-1-like_HR1-HR2"/>
    <property type="match status" value="1"/>
</dbReference>
<dbReference type="Gene3D" id="1.10.287.210">
    <property type="match status" value="1"/>
</dbReference>
<dbReference type="Gene3D" id="3.90.310.10">
    <property type="entry name" value="ENV polyprotein, receptor-binding domain"/>
    <property type="match status" value="1"/>
</dbReference>
<dbReference type="InterPro" id="IPR008981">
    <property type="entry name" value="FMuLV_rcpt-bd"/>
</dbReference>
<dbReference type="InterPro" id="IPR018154">
    <property type="entry name" value="TLV/ENV_coat_polyprotein"/>
</dbReference>
<dbReference type="PANTHER" id="PTHR10424:SF72">
    <property type="entry name" value="BC035947 PROTEIN-RELATED"/>
    <property type="match status" value="1"/>
</dbReference>
<dbReference type="PANTHER" id="PTHR10424">
    <property type="entry name" value="VIRAL ENVELOPE PROTEIN"/>
    <property type="match status" value="1"/>
</dbReference>
<dbReference type="Pfam" id="PF00429">
    <property type="entry name" value="TLV_coat"/>
    <property type="match status" value="1"/>
</dbReference>
<dbReference type="SUPFAM" id="SSF49830">
    <property type="entry name" value="ENV polyprotein, receptor-binding domain"/>
    <property type="match status" value="1"/>
</dbReference>
<dbReference type="SUPFAM" id="SSF58069">
    <property type="entry name" value="Virus ectodomain"/>
    <property type="match status" value="1"/>
</dbReference>
<proteinExistence type="inferred from homology"/>
<sequence>MEGPTHPKPSKDKTFSWDLIILVGVLLRLDAGMANPSPHQVYNITWTITNLVTGIKANATSMLGTLTDTFPTIYFDLCDIIGNTWNPSDQEPFPGYGCDQPMRRWQQRNTAFYVCPGHANRKQCGGPQDGFCAVWGCETTGETYWKPTSSWDYITVKKGVTQGIYQCNGGGWCGPCYDKAVHSSTTGASEGGRCNPLILQFTQKGRQTSWDGPKSWGLRLYRSGYDPIALFSVSRQVMTITPPQAMGPNPVLPDQKPPSRQSQIESRVIPHHPQGNGGTPGITLVNASIAPLSTPVTPASPKRIGTGNRLINLVQGTYLTLNVTNPNKTKDCWLCLVSRPPYYEGIAVLGNYSNQTNPPPSCLSVPQHKLTISEVSGQGLCIATVPKTHQALCNKTQKGHRGTHYLVAPNGTYWACNTGLTPCISMAVLNWTSDFCVLTELWPRITYHEPEYIYSHFENKPRFKRDPISLTVALMLGGITVGGMARNRNRDCGLLETAQFRQLQMAMHTDIQALEESISALEKSLTSLSEVVLQNRRGLDILFLQEGGLCTALKEECCFYADHTGLVRDNMAKLRERLKQRQQLFDSQQDGLEGWFNKSPWFTTLISSIMGPLMILLLILLFGPCILNRLVQFVKDRISVVQTLVLTQQYQRLGQWRLRPTVSPQLNV</sequence>
<keyword id="KW-0165">Cleavage on pair of basic residues</keyword>
<keyword id="KW-0175">Coiled coil</keyword>
<keyword id="KW-1015">Disulfide bond</keyword>
<keyword id="KW-1169">Fusion of virus membrane with host cell membrane</keyword>
<keyword id="KW-1168">Fusion of virus membrane with host membrane</keyword>
<keyword id="KW-0325">Glycoprotein</keyword>
<keyword id="KW-1032">Host cell membrane</keyword>
<keyword id="KW-1043">Host membrane</keyword>
<keyword id="KW-0945">Host-virus interaction</keyword>
<keyword id="KW-0449">Lipoprotein</keyword>
<keyword id="KW-0472">Membrane</keyword>
<keyword id="KW-0564">Palmitate</keyword>
<keyword id="KW-0732">Signal</keyword>
<keyword id="KW-0812">Transmembrane</keyword>
<keyword id="KW-1133">Transmembrane helix</keyword>
<keyword id="KW-1161">Viral attachment to host cell</keyword>
<keyword id="KW-0261">Viral envelope protein</keyword>
<keyword id="KW-1162">Viral penetration into host cytoplasm</keyword>
<keyword id="KW-0946">Virion</keyword>
<keyword id="KW-1160">Virus entry into host cell</keyword>
<name>ENV_FLVC6</name>
<comment type="function">
    <text evidence="1">The surface protein (SU) attaches the virus to the host cell by binding to its receptor. This interaction triggers the refolding of the transmembrane protein (TM) and is thought to activate its fusogenic potential by unmasking its fusion peptide. Fusion occurs at the host cell plasma membrane (By similarity).</text>
</comment>
<comment type="function">
    <text evidence="1">The transmembrane protein (TM) acts as a class I viral fusion protein. Under the current model, the protein has at least 3 conformational states: pre-fusion native state, pre-hairpin intermediate state, and post-fusion hairpin state. During viral and target cell membrane fusion, the coiled coil regions (heptad repeats) assume a trimer-of-hairpins structure, positioning the fusion peptide in close proximity to the C-terminal region of the ectodomain. The formation of this structure appears to drive apposition and subsequent fusion of viral and target cell membranes. Membranes fusion leads to delivery of the nucleocapsid into the cytoplasm (By similarity).</text>
</comment>
<comment type="subunit">
    <text evidence="1">The mature envelope protein (Env) consists of a trimer of SU-TM heterodimers attached by a labile interchain disulfide bond.</text>
</comment>
<comment type="subcellular location">
    <molecule>Transmembrane protein</molecule>
    <subcellularLocation>
        <location evidence="1">Virion membrane</location>
        <topology evidence="1">Single-pass type I membrane protein</topology>
    </subcellularLocation>
    <subcellularLocation>
        <location evidence="1">Host cell membrane</location>
        <topology evidence="1">Single-pass type I membrane protein</topology>
    </subcellularLocation>
</comment>
<comment type="subcellular location">
    <molecule>Surface protein</molecule>
    <subcellularLocation>
        <location>Virion membrane</location>
        <topology>Peripheral membrane protein</topology>
    </subcellularLocation>
    <subcellularLocation>
        <location evidence="1">Host cell membrane</location>
        <topology evidence="1">Peripheral membrane protein</topology>
    </subcellularLocation>
    <text evidence="1">The surface protein is not anchored to the viral envelope, but associates with the extravirion surface through its binding to TM. Both proteins are thought to be concentrated at the site of budding and incorporated into the virions possibly by contacts between the cytoplasmic tail of Env and the N-terminus of Gag (By similarity).</text>
</comment>
<comment type="subcellular location">
    <molecule>R-peptide</molecule>
    <subcellularLocation>
        <location evidence="1">Host cell membrane</location>
        <topology evidence="1">Peripheral membrane protein</topology>
    </subcellularLocation>
    <text evidence="1">The R-peptide is membrane-associated through its palmitate.</text>
</comment>
<comment type="domain">
    <text evidence="1">The 17 amino acids long immunosuppressive region is present in many retroviral envelope proteins. Synthetic peptides derived from this relatively conserved sequence inhibit immune function in vitro and in vivo (By similarity).</text>
</comment>
<comment type="domain">
    <text>The YXXL motif is involved in determining the exact site of viral release at the surface of infected mononuclear cells and promotes endocytosis.</text>
</comment>
<comment type="PTM">
    <text evidence="1">Specific enzymatic cleavages in vivo yield mature proteins. Envelope glycoproteins are synthesized as an inactive precursor that is N-glycosylated and processed likely by host cell furin or by a furin-like protease in the Golgi to yield the mature SU and TM proteins. The cleavage site between SU and TM requires the minimal sequence [KR]-X-[KR]-R. The R-peptide is released from the C-terminus of the cytoplasmic tail of the TM protein upon particle formation as a result of proteolytic cleavage by the viral protease. Cleavage of this peptide is required for TM to become fusogenic (By similarity).</text>
</comment>
<comment type="PTM">
    <text evidence="1">The CXXC motif is highly conserved across a broad range of retroviral envelope proteins. It is thought to participate in the formation of a labile disulfide bond possibly with the CX6CC motif present in the transmembrane protein. Isomerization of the intersubunit disulfide bond to an SU intrachain disulfide bond is thought to occur upon receptor recognition in order to allow membrane fusion (By similarity).</text>
</comment>
<comment type="PTM">
    <text evidence="1">The transmembrane protein is palmitoylated.</text>
</comment>
<comment type="PTM">
    <text evidence="1">The R-peptide is palmitoylated.</text>
</comment>
<gene>
    <name type="primary">env</name>
</gene>
<organismHost>
    <name type="scientific">Felidae</name>
    <name type="common">cat family</name>
    <dbReference type="NCBI Taxonomy" id="9681"/>
</organismHost>
<reference key="1">
    <citation type="journal article" date="1989" name="J. Virol.">
        <title>Nucleotide sequence and distinctive characteristics of the env gene of endogenous feline leukemia provirus.</title>
        <authorList>
            <person name="Kumar D.V."/>
            <person name="Berry B.T."/>
            <person name="Roy-Burman P."/>
        </authorList>
    </citation>
    <scope>NUCLEOTIDE SEQUENCE [GENOMIC DNA]</scope>
</reference>
<protein>
    <recommendedName>
        <fullName>Envelope glycoprotein</fullName>
    </recommendedName>
    <alternativeName>
        <fullName>Env polyprotein</fullName>
    </alternativeName>
    <component>
        <recommendedName>
            <fullName>Surface protein</fullName>
            <shortName>SU</shortName>
        </recommendedName>
        <alternativeName>
            <fullName>Glycoprotein 70</fullName>
            <shortName>gp70</shortName>
        </alternativeName>
    </component>
    <component>
        <recommendedName>
            <fullName>Transmembrane protein</fullName>
            <shortName>TM</shortName>
        </recommendedName>
        <alternativeName>
            <fullName>Envelope protein p15E</fullName>
        </alternativeName>
    </component>
    <component>
        <recommendedName>
            <fullName>R-peptide</fullName>
        </recommendedName>
        <alternativeName>
            <fullName>p2E</fullName>
        </alternativeName>
    </component>
</protein>
<organism>
    <name type="scientific">Feline leukemia virus (isolate CFE-6)</name>
    <dbReference type="NCBI Taxonomy" id="11922"/>
    <lineage>
        <taxon>Viruses</taxon>
        <taxon>Riboviria</taxon>
        <taxon>Pararnavirae</taxon>
        <taxon>Artverviricota</taxon>
        <taxon>Revtraviricetes</taxon>
        <taxon>Ortervirales</taxon>
        <taxon>Retroviridae</taxon>
        <taxon>Orthoretrovirinae</taxon>
        <taxon>Gammaretrovirus</taxon>
        <taxon>Feline leukemia virus</taxon>
    </lineage>
</organism>
<evidence type="ECO:0000250" key="1"/>
<evidence type="ECO:0000255" key="2"/>
<evidence type="ECO:0000256" key="3">
    <source>
        <dbReference type="SAM" id="MobiDB-lite"/>
    </source>
</evidence>